<comment type="function">
    <text evidence="1">Component of the class I major histocompatibility complex (MHC). Involved in the presentation of peptide antigens to the immune system (By similarity).</text>
</comment>
<comment type="subunit">
    <text evidence="1">Heterodimer of an alpha chain and a beta chain. Beta-2-microglobulin is the beta-chain of major histocompatibility complex class I molecules (By similarity).</text>
</comment>
<comment type="subcellular location">
    <subcellularLocation>
        <location evidence="1">Secreted</location>
    </subcellularLocation>
</comment>
<comment type="similarity">
    <text evidence="3">Belongs to the beta-2-microglobulin family.</text>
</comment>
<evidence type="ECO:0000250" key="1"/>
<evidence type="ECO:0000255" key="2">
    <source>
        <dbReference type="PROSITE-ProRule" id="PRU00114"/>
    </source>
</evidence>
<evidence type="ECO:0000305" key="3"/>
<keyword id="KW-1015">Disulfide bond</keyword>
<keyword id="KW-0391">Immunity</keyword>
<keyword id="KW-0393">Immunoglobulin domain</keyword>
<keyword id="KW-0490">MHC I</keyword>
<keyword id="KW-0964">Secreted</keyword>
<keyword id="KW-0732">Signal</keyword>
<dbReference type="EMBL" id="AF032069">
    <property type="protein sequence ID" value="AAC52102.1"/>
    <property type="molecule type" value="Genomic_DNA"/>
</dbReference>
<dbReference type="EMBL" id="AF032068">
    <property type="protein sequence ID" value="AAC52102.1"/>
    <property type="status" value="JOINED"/>
    <property type="molecule type" value="Genomic_DNA"/>
</dbReference>
<dbReference type="SMR" id="O77530"/>
<dbReference type="GO" id="GO:0005576">
    <property type="term" value="C:extracellular region"/>
    <property type="evidence" value="ECO:0007669"/>
    <property type="project" value="UniProtKB-SubCell"/>
</dbReference>
<dbReference type="GO" id="GO:0042612">
    <property type="term" value="C:MHC class I protein complex"/>
    <property type="evidence" value="ECO:0007669"/>
    <property type="project" value="UniProtKB-KW"/>
</dbReference>
<dbReference type="GO" id="GO:0002474">
    <property type="term" value="P:antigen processing and presentation of peptide antigen via MHC class I"/>
    <property type="evidence" value="ECO:0007669"/>
    <property type="project" value="UniProtKB-KW"/>
</dbReference>
<dbReference type="GO" id="GO:0006955">
    <property type="term" value="P:immune response"/>
    <property type="evidence" value="ECO:0007669"/>
    <property type="project" value="InterPro"/>
</dbReference>
<dbReference type="CDD" id="cd05770">
    <property type="entry name" value="IgC1_beta2m"/>
    <property type="match status" value="1"/>
</dbReference>
<dbReference type="FunFam" id="2.60.40.10:FF:001005">
    <property type="entry name" value="Beta-2-microglobulin"/>
    <property type="match status" value="1"/>
</dbReference>
<dbReference type="Gene3D" id="2.60.40.10">
    <property type="entry name" value="Immunoglobulins"/>
    <property type="match status" value="1"/>
</dbReference>
<dbReference type="InterPro" id="IPR015707">
    <property type="entry name" value="B2Microglobulin"/>
</dbReference>
<dbReference type="InterPro" id="IPR007110">
    <property type="entry name" value="Ig-like_dom"/>
</dbReference>
<dbReference type="InterPro" id="IPR036179">
    <property type="entry name" value="Ig-like_dom_sf"/>
</dbReference>
<dbReference type="InterPro" id="IPR013783">
    <property type="entry name" value="Ig-like_fold"/>
</dbReference>
<dbReference type="InterPro" id="IPR003006">
    <property type="entry name" value="Ig/MHC_CS"/>
</dbReference>
<dbReference type="InterPro" id="IPR003597">
    <property type="entry name" value="Ig_C1-set"/>
</dbReference>
<dbReference type="InterPro" id="IPR050160">
    <property type="entry name" value="MHC/Immunoglobulin"/>
</dbReference>
<dbReference type="PANTHER" id="PTHR19944:SF62">
    <property type="entry name" value="BETA-2-MICROGLOBULIN"/>
    <property type="match status" value="1"/>
</dbReference>
<dbReference type="PANTHER" id="PTHR19944">
    <property type="entry name" value="MHC CLASS II-RELATED"/>
    <property type="match status" value="1"/>
</dbReference>
<dbReference type="Pfam" id="PF07654">
    <property type="entry name" value="C1-set"/>
    <property type="match status" value="1"/>
</dbReference>
<dbReference type="SMART" id="SM00407">
    <property type="entry name" value="IGc1"/>
    <property type="match status" value="1"/>
</dbReference>
<dbReference type="SUPFAM" id="SSF48726">
    <property type="entry name" value="Immunoglobulin"/>
    <property type="match status" value="1"/>
</dbReference>
<dbReference type="PROSITE" id="PS50835">
    <property type="entry name" value="IG_LIKE"/>
    <property type="match status" value="1"/>
</dbReference>
<dbReference type="PROSITE" id="PS00290">
    <property type="entry name" value="IG_MHC"/>
    <property type="match status" value="1"/>
</dbReference>
<accession>O77530</accession>
<name>B2MG_CHETO</name>
<gene>
    <name type="primary">B2M</name>
</gene>
<protein>
    <recommendedName>
        <fullName>Beta-2-microglobulin</fullName>
    </recommendedName>
</protein>
<proteinExistence type="inferred from homology"/>
<reference key="1">
    <citation type="journal article" date="1998" name="Immunogenetics">
        <title>Beta-2-microglobulin in neotropical primates (Platyrrhini).</title>
        <authorList>
            <person name="Canavez F.C."/>
            <person name="Ladasky J.J."/>
            <person name="Muniz J.A.P.C."/>
            <person name="Seuanez H.N."/>
            <person name="Parham P."/>
        </authorList>
    </citation>
    <scope>NUCLEOTIDE SEQUENCE [GENOMIC DNA]</scope>
    <source>
        <tissue>Blood</tissue>
    </source>
</reference>
<feature type="signal peptide" evidence="1">
    <location>
        <begin position="1"/>
        <end position="20"/>
    </location>
</feature>
<feature type="chain" id="PRO_0000018770" description="Beta-2-microglobulin">
    <location>
        <begin position="21"/>
        <end position="119"/>
    </location>
</feature>
<feature type="domain" description="Ig-like C1-type">
    <location>
        <begin position="25"/>
        <end position="114"/>
    </location>
</feature>
<feature type="disulfide bond" evidence="2">
    <location>
        <begin position="45"/>
        <end position="100"/>
    </location>
</feature>
<organism>
    <name type="scientific">Cheracebus torquatus</name>
    <name type="common">Collared titi monkey</name>
    <name type="synonym">Callicebus torquatus</name>
    <dbReference type="NCBI Taxonomy" id="30592"/>
    <lineage>
        <taxon>Eukaryota</taxon>
        <taxon>Metazoa</taxon>
        <taxon>Chordata</taxon>
        <taxon>Craniata</taxon>
        <taxon>Vertebrata</taxon>
        <taxon>Euteleostomi</taxon>
        <taxon>Mammalia</taxon>
        <taxon>Eutheria</taxon>
        <taxon>Euarchontoglires</taxon>
        <taxon>Primates</taxon>
        <taxon>Haplorrhini</taxon>
        <taxon>Platyrrhini</taxon>
        <taxon>Pitheciidae</taxon>
        <taxon>Callicebinae</taxon>
        <taxon>Cheracebus</taxon>
    </lineage>
</organism>
<sequence length="119" mass="13654">MAPFVAIALLVLLSLSGLEAIQHAPKIQVYSRHPAENGKPNFLNCYVSGFHPSDIEVDLLKNGKKIEKVEHSDLSFSKDWSFYLLYYTEFTPNEKDEYACRVSHVTFSTPKTVKWDRNM</sequence>